<feature type="chain" id="PRO_0000337628" description="3-(3-hydroxy-phenyl)propionate/3-hydroxycinnamic acid hydroxylase">
    <location>
        <begin position="1"/>
        <end position="622"/>
    </location>
</feature>
<feature type="binding site" evidence="1">
    <location>
        <begin position="20"/>
        <end position="49"/>
    </location>
    <ligand>
        <name>FAD</name>
        <dbReference type="ChEBI" id="CHEBI:57692"/>
    </ligand>
</feature>
<feature type="binding site" evidence="1">
    <location>
        <begin position="288"/>
        <end position="298"/>
    </location>
    <ligand>
        <name>FAD</name>
        <dbReference type="ChEBI" id="CHEBI:57692"/>
    </ligand>
</feature>
<protein>
    <recommendedName>
        <fullName evidence="1">3-(3-hydroxy-phenyl)propionate/3-hydroxycinnamic acid hydroxylase</fullName>
        <shortName evidence="1">3-HCI hydroxylase</shortName>
        <shortName evidence="1">3-HPP hydroxylase</shortName>
        <ecNumber evidence="1">1.14.13.127</ecNumber>
    </recommendedName>
</protein>
<accession>Q13QI0</accession>
<proteinExistence type="inferred from homology"/>
<gene>
    <name evidence="1" type="primary">mhpA</name>
    <name type="ordered locus">Bxeno_B0691</name>
    <name type="ORF">Bxe_B2329</name>
</gene>
<keyword id="KW-0058">Aromatic hydrocarbons catabolism</keyword>
<keyword id="KW-0274">FAD</keyword>
<keyword id="KW-0285">Flavoprotein</keyword>
<keyword id="KW-0520">NAD</keyword>
<keyword id="KW-0560">Oxidoreductase</keyword>
<keyword id="KW-1185">Reference proteome</keyword>
<sequence length="622" mass="68723">MPASNDPVAASRRCETVSADVAIIGAGPVGLMIANYLGLQGVRVVVLEKLEQIIDYPRAIGLDDEALRVFQSVGLADVLLPHTTPDHWMRFVTHTGHCFASIEPRTDEFGWSRRNAFIQPLADRVLYEGLRRFPHVQVLFGTSVSGFTQDPAGVTIEADDEKGGRRTVRASYMVGADGGNSFVRRLLDVPFEGRTKPNQWIVVDVRNDPIGSPHIYMHCDPQRPYVSAALPHGIRRFEFMVMPGETEEELSKPENMAALIRKVVADPQKVDYIRKRVYTHNARLASTFRVDRVLLAGDAAHIMPVWQGQGYNSGIRDASNLGWKLAMVVKQLAGDALLDTYTAERRAHARSMIHLSEVAGDIFAPTSRFGIKFRDAFVRTFNVVPAMKRYFVEMRFKPMPRYETGVVLLAERKRKHGVMARVLERSGHSAPGRLLGLMSEKRESLLGRLVYGRDPSCHSPVGRMFIQPRVRTAEGSVVRLDDVLGSRFAIIGWGSDPTFGLSPLARETWQRLGGCFVLAKPDNQLDFHDDVPAGVIAIGDVQGRLKEWFARVPESVVLLRPDRFVAGMCTPQQVSDCIGELALKLSLKPAEQPAVKLAVPERAVAPESVAGVAAVAAVATRA</sequence>
<evidence type="ECO:0000255" key="1">
    <source>
        <dbReference type="HAMAP-Rule" id="MF_01652"/>
    </source>
</evidence>
<dbReference type="EC" id="1.14.13.127" evidence="1"/>
<dbReference type="EMBL" id="CP000271">
    <property type="protein sequence ID" value="ABE33659.1"/>
    <property type="molecule type" value="Genomic_DNA"/>
</dbReference>
<dbReference type="RefSeq" id="WP_011491019.1">
    <property type="nucleotide sequence ID" value="NC_007952.1"/>
</dbReference>
<dbReference type="SMR" id="Q13QI0"/>
<dbReference type="STRING" id="266265.Bxe_B2329"/>
<dbReference type="KEGG" id="bxb:DR64_4661"/>
<dbReference type="KEGG" id="bxe:Bxe_B2329"/>
<dbReference type="PATRIC" id="fig|266265.5.peg.5383"/>
<dbReference type="eggNOG" id="COG0654">
    <property type="taxonomic scope" value="Bacteria"/>
</dbReference>
<dbReference type="OrthoDB" id="3443359at2"/>
<dbReference type="UniPathway" id="UPA00714"/>
<dbReference type="Proteomes" id="UP000001817">
    <property type="component" value="Chromosome 2"/>
</dbReference>
<dbReference type="GO" id="GO:0008688">
    <property type="term" value="F:3-(3-hydroxyphenyl)propionate hydroxylase activity"/>
    <property type="evidence" value="ECO:0007669"/>
    <property type="project" value="UniProtKB-UniRule"/>
</dbReference>
<dbReference type="GO" id="GO:0071949">
    <property type="term" value="F:FAD binding"/>
    <property type="evidence" value="ECO:0007669"/>
    <property type="project" value="InterPro"/>
</dbReference>
<dbReference type="GO" id="GO:0019622">
    <property type="term" value="P:3-(3-hydroxy)phenylpropionate catabolic process"/>
    <property type="evidence" value="ECO:0007669"/>
    <property type="project" value="UniProtKB-UniRule"/>
</dbReference>
<dbReference type="GO" id="GO:0019380">
    <property type="term" value="P:3-phenylpropionate catabolic process"/>
    <property type="evidence" value="ECO:0007669"/>
    <property type="project" value="UniProtKB-UniPathway"/>
</dbReference>
<dbReference type="Gene3D" id="3.30.70.2450">
    <property type="match status" value="1"/>
</dbReference>
<dbReference type="Gene3D" id="3.50.50.60">
    <property type="entry name" value="FAD/NAD(P)-binding domain"/>
    <property type="match status" value="1"/>
</dbReference>
<dbReference type="HAMAP" id="MF_01652">
    <property type="entry name" value="MhpA"/>
    <property type="match status" value="1"/>
</dbReference>
<dbReference type="InterPro" id="IPR023786">
    <property type="entry name" value="3-HPP/3HCI_hydroxylase"/>
</dbReference>
<dbReference type="InterPro" id="IPR002938">
    <property type="entry name" value="FAD-bd"/>
</dbReference>
<dbReference type="InterPro" id="IPR036188">
    <property type="entry name" value="FAD/NAD-bd_sf"/>
</dbReference>
<dbReference type="InterPro" id="IPR050631">
    <property type="entry name" value="PheA/TfdB_FAD_monoxygenase"/>
</dbReference>
<dbReference type="NCBIfam" id="NF004829">
    <property type="entry name" value="PRK06183.1-3"/>
    <property type="match status" value="1"/>
</dbReference>
<dbReference type="NCBIfam" id="NF004830">
    <property type="entry name" value="PRK06183.1-4"/>
    <property type="match status" value="1"/>
</dbReference>
<dbReference type="PANTHER" id="PTHR43476">
    <property type="entry name" value="3-(3-HYDROXY-PHENYL)PROPIONATE/3-HYDROXYCINNAMIC ACID HYDROXYLASE"/>
    <property type="match status" value="1"/>
</dbReference>
<dbReference type="PANTHER" id="PTHR43476:SF3">
    <property type="entry name" value="FAD-BINDING MONOOXYGENASE"/>
    <property type="match status" value="1"/>
</dbReference>
<dbReference type="Pfam" id="PF01494">
    <property type="entry name" value="FAD_binding_3"/>
    <property type="match status" value="1"/>
</dbReference>
<dbReference type="PRINTS" id="PR00420">
    <property type="entry name" value="RNGMNOXGNASE"/>
</dbReference>
<dbReference type="SUPFAM" id="SSF51905">
    <property type="entry name" value="FAD/NAD(P)-binding domain"/>
    <property type="match status" value="1"/>
</dbReference>
<organism>
    <name type="scientific">Paraburkholderia xenovorans (strain LB400)</name>
    <dbReference type="NCBI Taxonomy" id="266265"/>
    <lineage>
        <taxon>Bacteria</taxon>
        <taxon>Pseudomonadati</taxon>
        <taxon>Pseudomonadota</taxon>
        <taxon>Betaproteobacteria</taxon>
        <taxon>Burkholderiales</taxon>
        <taxon>Burkholderiaceae</taxon>
        <taxon>Paraburkholderia</taxon>
    </lineage>
</organism>
<comment type="function">
    <text evidence="1">Catalyzes the insertion of one atom of molecular oxygen into position 2 of the phenyl ring of 3-(3-hydroxyphenyl)propionate (3-HPP) and hydroxycinnamic acid (3HCI).</text>
</comment>
<comment type="catalytic activity">
    <reaction evidence="1">
        <text>3-(3-hydroxyphenyl)propanoate + NADH + O2 + H(+) = 3-(2,3-dihydroxyphenyl)propanoate + NAD(+) + H2O</text>
        <dbReference type="Rhea" id="RHEA:24785"/>
        <dbReference type="ChEBI" id="CHEBI:15377"/>
        <dbReference type="ChEBI" id="CHEBI:15378"/>
        <dbReference type="ChEBI" id="CHEBI:15379"/>
        <dbReference type="ChEBI" id="CHEBI:46951"/>
        <dbReference type="ChEBI" id="CHEBI:57277"/>
        <dbReference type="ChEBI" id="CHEBI:57540"/>
        <dbReference type="ChEBI" id="CHEBI:57945"/>
        <dbReference type="EC" id="1.14.13.127"/>
    </reaction>
</comment>
<comment type="catalytic activity">
    <reaction evidence="1">
        <text>(2E)-3-(3-hydroxyphenyl)prop-2-enoate + NADH + O2 + H(+) = (2E)-3-(2,3-dihydroxyphenyl)prop-2-enoate + NAD(+) + H2O</text>
        <dbReference type="Rhea" id="RHEA:27846"/>
        <dbReference type="ChEBI" id="CHEBI:15377"/>
        <dbReference type="ChEBI" id="CHEBI:15378"/>
        <dbReference type="ChEBI" id="CHEBI:15379"/>
        <dbReference type="ChEBI" id="CHEBI:47928"/>
        <dbReference type="ChEBI" id="CHEBI:57540"/>
        <dbReference type="ChEBI" id="CHEBI:57945"/>
        <dbReference type="ChEBI" id="CHEBI:58642"/>
        <dbReference type="EC" id="1.14.13.127"/>
    </reaction>
</comment>
<comment type="cofactor">
    <cofactor evidence="1">
        <name>FAD</name>
        <dbReference type="ChEBI" id="CHEBI:57692"/>
    </cofactor>
</comment>
<comment type="pathway">
    <text evidence="1">Aromatic compound metabolism; 3-phenylpropanoate degradation.</text>
</comment>
<comment type="similarity">
    <text evidence="1">Belongs to the PheA/TfdB FAD monooxygenase family.</text>
</comment>
<name>MHPA_PARXL</name>
<reference key="1">
    <citation type="journal article" date="2006" name="Proc. Natl. Acad. Sci. U.S.A.">
        <title>Burkholderia xenovorans LB400 harbors a multi-replicon, 9.73-Mbp genome shaped for versatility.</title>
        <authorList>
            <person name="Chain P.S.G."/>
            <person name="Denef V.J."/>
            <person name="Konstantinidis K.T."/>
            <person name="Vergez L.M."/>
            <person name="Agullo L."/>
            <person name="Reyes V.L."/>
            <person name="Hauser L."/>
            <person name="Cordova M."/>
            <person name="Gomez L."/>
            <person name="Gonzalez M."/>
            <person name="Land M."/>
            <person name="Lao V."/>
            <person name="Larimer F."/>
            <person name="LiPuma J.J."/>
            <person name="Mahenthiralingam E."/>
            <person name="Malfatti S.A."/>
            <person name="Marx C.J."/>
            <person name="Parnell J.J."/>
            <person name="Ramette A."/>
            <person name="Richardson P."/>
            <person name="Seeger M."/>
            <person name="Smith D."/>
            <person name="Spilker T."/>
            <person name="Sul W.J."/>
            <person name="Tsoi T.V."/>
            <person name="Ulrich L.E."/>
            <person name="Zhulin I.B."/>
            <person name="Tiedje J.M."/>
        </authorList>
    </citation>
    <scope>NUCLEOTIDE SEQUENCE [LARGE SCALE GENOMIC DNA]</scope>
    <source>
        <strain>LB400</strain>
    </source>
</reference>